<comment type="function">
    <text evidence="1">Binds 16S rRNA, required for the assembly of 30S particles and may also be responsible for determining the conformation of the 16S rRNA at the A site.</text>
</comment>
<comment type="cofactor">
    <cofactor evidence="1">
        <name>Zn(2+)</name>
        <dbReference type="ChEBI" id="CHEBI:29105"/>
    </cofactor>
    <text evidence="1">Binds 1 zinc ion per subunit.</text>
</comment>
<comment type="subunit">
    <text evidence="1">Part of the 30S ribosomal subunit. Contacts proteins S3 and S10.</text>
</comment>
<comment type="similarity">
    <text evidence="1">Belongs to the universal ribosomal protein uS14 family. Zinc-binding uS14 subfamily.</text>
</comment>
<evidence type="ECO:0000255" key="1">
    <source>
        <dbReference type="HAMAP-Rule" id="MF_01364"/>
    </source>
</evidence>
<evidence type="ECO:0000305" key="2"/>
<keyword id="KW-0479">Metal-binding</keyword>
<keyword id="KW-0687">Ribonucleoprotein</keyword>
<keyword id="KW-0689">Ribosomal protein</keyword>
<keyword id="KW-0694">RNA-binding</keyword>
<keyword id="KW-0699">rRNA-binding</keyword>
<keyword id="KW-0862">Zinc</keyword>
<reference key="1">
    <citation type="submission" date="2009-03" db="EMBL/GenBank/DDBJ databases">
        <title>Comparison of the complete genome sequences of Rhodococcus erythropolis PR4 and Rhodococcus opacus B4.</title>
        <authorList>
            <person name="Takarada H."/>
            <person name="Sekine M."/>
            <person name="Hosoyama A."/>
            <person name="Yamada R."/>
            <person name="Fujisawa T."/>
            <person name="Omata S."/>
            <person name="Shimizu A."/>
            <person name="Tsukatani N."/>
            <person name="Tanikawa S."/>
            <person name="Fujita N."/>
            <person name="Harayama S."/>
        </authorList>
    </citation>
    <scope>NUCLEOTIDE SEQUENCE [LARGE SCALE GENOMIC DNA]</scope>
    <source>
        <strain>B4</strain>
    </source>
</reference>
<protein>
    <recommendedName>
        <fullName evidence="1">Small ribosomal subunit protein uS14</fullName>
    </recommendedName>
    <alternativeName>
        <fullName evidence="2">30S ribosomal protein S14 type Z</fullName>
    </alternativeName>
</protein>
<organism>
    <name type="scientific">Rhodococcus opacus (strain B4)</name>
    <dbReference type="NCBI Taxonomy" id="632772"/>
    <lineage>
        <taxon>Bacteria</taxon>
        <taxon>Bacillati</taxon>
        <taxon>Actinomycetota</taxon>
        <taxon>Actinomycetes</taxon>
        <taxon>Mycobacteriales</taxon>
        <taxon>Nocardiaceae</taxon>
        <taxon>Rhodococcus</taxon>
    </lineage>
</organism>
<sequence>MAKKALVNKANKKPKFAVRAYTRCQRCGRPHSVFRKFGLCRICVREMAHAGELPGVHKSSW</sequence>
<accession>C1B025</accession>
<gene>
    <name evidence="1" type="primary">rpsZ</name>
    <name evidence="1" type="synonym">rpsN</name>
    <name type="ordered locus">ROP_61990</name>
</gene>
<proteinExistence type="inferred from homology"/>
<dbReference type="EMBL" id="AP011115">
    <property type="protein sequence ID" value="BAH54446.1"/>
    <property type="molecule type" value="Genomic_DNA"/>
</dbReference>
<dbReference type="RefSeq" id="WP_005239644.1">
    <property type="nucleotide sequence ID" value="NC_012522.1"/>
</dbReference>
<dbReference type="SMR" id="C1B025"/>
<dbReference type="STRING" id="632772.ROP_61990"/>
<dbReference type="KEGG" id="rop:ROP_61990"/>
<dbReference type="PATRIC" id="fig|632772.20.peg.6475"/>
<dbReference type="HOGENOM" id="CLU_139869_3_0_11"/>
<dbReference type="OrthoDB" id="9810484at2"/>
<dbReference type="Proteomes" id="UP000002212">
    <property type="component" value="Chromosome"/>
</dbReference>
<dbReference type="GO" id="GO:0005737">
    <property type="term" value="C:cytoplasm"/>
    <property type="evidence" value="ECO:0007669"/>
    <property type="project" value="UniProtKB-ARBA"/>
</dbReference>
<dbReference type="GO" id="GO:0015935">
    <property type="term" value="C:small ribosomal subunit"/>
    <property type="evidence" value="ECO:0007669"/>
    <property type="project" value="TreeGrafter"/>
</dbReference>
<dbReference type="GO" id="GO:0019843">
    <property type="term" value="F:rRNA binding"/>
    <property type="evidence" value="ECO:0007669"/>
    <property type="project" value="UniProtKB-UniRule"/>
</dbReference>
<dbReference type="GO" id="GO:0003735">
    <property type="term" value="F:structural constituent of ribosome"/>
    <property type="evidence" value="ECO:0007669"/>
    <property type="project" value="InterPro"/>
</dbReference>
<dbReference type="GO" id="GO:0008270">
    <property type="term" value="F:zinc ion binding"/>
    <property type="evidence" value="ECO:0007669"/>
    <property type="project" value="UniProtKB-UniRule"/>
</dbReference>
<dbReference type="GO" id="GO:0006412">
    <property type="term" value="P:translation"/>
    <property type="evidence" value="ECO:0007669"/>
    <property type="project" value="UniProtKB-UniRule"/>
</dbReference>
<dbReference type="FunFam" id="4.10.830.10:FF:000001">
    <property type="entry name" value="30S ribosomal protein S14 type Z"/>
    <property type="match status" value="1"/>
</dbReference>
<dbReference type="Gene3D" id="4.10.830.10">
    <property type="entry name" value="30s Ribosomal Protein S14, Chain N"/>
    <property type="match status" value="1"/>
</dbReference>
<dbReference type="HAMAP" id="MF_01364_B">
    <property type="entry name" value="Ribosomal_uS14_2_B"/>
    <property type="match status" value="1"/>
</dbReference>
<dbReference type="InterPro" id="IPR001209">
    <property type="entry name" value="Ribosomal_uS14"/>
</dbReference>
<dbReference type="InterPro" id="IPR023053">
    <property type="entry name" value="Ribosomal_uS14_bact"/>
</dbReference>
<dbReference type="InterPro" id="IPR018271">
    <property type="entry name" value="Ribosomal_uS14_CS"/>
</dbReference>
<dbReference type="InterPro" id="IPR043140">
    <property type="entry name" value="Ribosomal_uS14_sf"/>
</dbReference>
<dbReference type="NCBIfam" id="NF005974">
    <property type="entry name" value="PRK08061.1"/>
    <property type="match status" value="1"/>
</dbReference>
<dbReference type="PANTHER" id="PTHR19836">
    <property type="entry name" value="30S RIBOSOMAL PROTEIN S14"/>
    <property type="match status" value="1"/>
</dbReference>
<dbReference type="PANTHER" id="PTHR19836:SF19">
    <property type="entry name" value="SMALL RIBOSOMAL SUBUNIT PROTEIN US14M"/>
    <property type="match status" value="1"/>
</dbReference>
<dbReference type="Pfam" id="PF00253">
    <property type="entry name" value="Ribosomal_S14"/>
    <property type="match status" value="1"/>
</dbReference>
<dbReference type="SUPFAM" id="SSF57716">
    <property type="entry name" value="Glucocorticoid receptor-like (DNA-binding domain)"/>
    <property type="match status" value="1"/>
</dbReference>
<dbReference type="PROSITE" id="PS00527">
    <property type="entry name" value="RIBOSOMAL_S14"/>
    <property type="match status" value="1"/>
</dbReference>
<feature type="chain" id="PRO_1000166778" description="Small ribosomal subunit protein uS14">
    <location>
        <begin position="1"/>
        <end position="61"/>
    </location>
</feature>
<feature type="binding site" evidence="1">
    <location>
        <position position="24"/>
    </location>
    <ligand>
        <name>Zn(2+)</name>
        <dbReference type="ChEBI" id="CHEBI:29105"/>
    </ligand>
</feature>
<feature type="binding site" evidence="1">
    <location>
        <position position="27"/>
    </location>
    <ligand>
        <name>Zn(2+)</name>
        <dbReference type="ChEBI" id="CHEBI:29105"/>
    </ligand>
</feature>
<feature type="binding site" evidence="1">
    <location>
        <position position="40"/>
    </location>
    <ligand>
        <name>Zn(2+)</name>
        <dbReference type="ChEBI" id="CHEBI:29105"/>
    </ligand>
</feature>
<feature type="binding site" evidence="1">
    <location>
        <position position="43"/>
    </location>
    <ligand>
        <name>Zn(2+)</name>
        <dbReference type="ChEBI" id="CHEBI:29105"/>
    </ligand>
</feature>
<name>RS14Z_RHOOB</name>